<protein>
    <recommendedName>
        <fullName>Regulator of G-protein signaling 5</fullName>
        <shortName>RGS5</shortName>
    </recommendedName>
</protein>
<dbReference type="EMBL" id="U67188">
    <property type="protein sequence ID" value="AAB50618.1"/>
    <property type="molecule type" value="mRNA"/>
</dbReference>
<dbReference type="EMBL" id="AK004165">
    <property type="protein sequence ID" value="BAB23201.1"/>
    <property type="molecule type" value="mRNA"/>
</dbReference>
<dbReference type="EMBL" id="AK044096">
    <property type="protein sequence ID" value="BAC31773.1"/>
    <property type="molecule type" value="mRNA"/>
</dbReference>
<dbReference type="EMBL" id="AK054098">
    <property type="protein sequence ID" value="BAC35655.1"/>
    <property type="molecule type" value="mRNA"/>
</dbReference>
<dbReference type="EMBL" id="BC037683">
    <property type="protein sequence ID" value="AAH37683.1"/>
    <property type="molecule type" value="mRNA"/>
</dbReference>
<dbReference type="CCDS" id="CCDS15464.1"/>
<dbReference type="RefSeq" id="NP_033089.2">
    <property type="nucleotide sequence ID" value="NM_009063.4"/>
</dbReference>
<dbReference type="SMR" id="O08850"/>
<dbReference type="ELM" id="O08850"/>
<dbReference type="FunCoup" id="O08850">
    <property type="interactions" value="1068"/>
</dbReference>
<dbReference type="STRING" id="10090.ENSMUSP00000027997"/>
<dbReference type="PhosphoSitePlus" id="O08850"/>
<dbReference type="PaxDb" id="10090-ENSMUSP00000027997"/>
<dbReference type="ProteomicsDB" id="253265"/>
<dbReference type="Antibodypedia" id="982">
    <property type="antibodies" value="408 antibodies from 30 providers"/>
</dbReference>
<dbReference type="DNASU" id="19737"/>
<dbReference type="Ensembl" id="ENSMUST00000027997.9">
    <property type="protein sequence ID" value="ENSMUSP00000027997.4"/>
    <property type="gene ID" value="ENSMUSG00000026678.11"/>
</dbReference>
<dbReference type="GeneID" id="19737"/>
<dbReference type="KEGG" id="mmu:19737"/>
<dbReference type="UCSC" id="uc007dlm.1">
    <property type="organism name" value="mouse"/>
</dbReference>
<dbReference type="AGR" id="MGI:1098434"/>
<dbReference type="CTD" id="8490"/>
<dbReference type="MGI" id="MGI:1098434">
    <property type="gene designation" value="Rgs5"/>
</dbReference>
<dbReference type="VEuPathDB" id="HostDB:ENSMUSG00000026678"/>
<dbReference type="eggNOG" id="KOG3589">
    <property type="taxonomic scope" value="Eukaryota"/>
</dbReference>
<dbReference type="GeneTree" id="ENSGT00940000157380"/>
<dbReference type="HOGENOM" id="CLU_059863_3_0_1"/>
<dbReference type="InParanoid" id="O08850"/>
<dbReference type="OMA" id="FIIPYPD"/>
<dbReference type="OrthoDB" id="196547at2759"/>
<dbReference type="PhylomeDB" id="O08850"/>
<dbReference type="TreeFam" id="TF315837"/>
<dbReference type="Reactome" id="R-MMU-416476">
    <property type="pathway name" value="G alpha (q) signalling events"/>
</dbReference>
<dbReference type="Reactome" id="R-MMU-418594">
    <property type="pathway name" value="G alpha (i) signalling events"/>
</dbReference>
<dbReference type="BioGRID-ORCS" id="19737">
    <property type="hits" value="1 hit in 78 CRISPR screens"/>
</dbReference>
<dbReference type="ChiTaRS" id="Rgs5">
    <property type="organism name" value="mouse"/>
</dbReference>
<dbReference type="PRO" id="PR:O08850"/>
<dbReference type="Proteomes" id="UP000000589">
    <property type="component" value="Chromosome 1"/>
</dbReference>
<dbReference type="RNAct" id="O08850">
    <property type="molecule type" value="protein"/>
</dbReference>
<dbReference type="Bgee" id="ENSMUSG00000026678">
    <property type="expression patterns" value="Expressed in aorta tunica media and 263 other cell types or tissues"/>
</dbReference>
<dbReference type="ExpressionAtlas" id="O08850">
    <property type="expression patterns" value="baseline and differential"/>
</dbReference>
<dbReference type="GO" id="GO:0005829">
    <property type="term" value="C:cytosol"/>
    <property type="evidence" value="ECO:0007669"/>
    <property type="project" value="Ensembl"/>
</dbReference>
<dbReference type="GO" id="GO:0043231">
    <property type="term" value="C:intracellular membrane-bounded organelle"/>
    <property type="evidence" value="ECO:0007669"/>
    <property type="project" value="Ensembl"/>
</dbReference>
<dbReference type="GO" id="GO:0016020">
    <property type="term" value="C:membrane"/>
    <property type="evidence" value="ECO:0007669"/>
    <property type="project" value="UniProtKB-SubCell"/>
</dbReference>
<dbReference type="GO" id="GO:0005096">
    <property type="term" value="F:GTPase activator activity"/>
    <property type="evidence" value="ECO:0000304"/>
    <property type="project" value="MGI"/>
</dbReference>
<dbReference type="GO" id="GO:0007186">
    <property type="term" value="P:G protein-coupled receptor signaling pathway"/>
    <property type="evidence" value="ECO:0000304"/>
    <property type="project" value="MGI"/>
</dbReference>
<dbReference type="GO" id="GO:0009968">
    <property type="term" value="P:negative regulation of signal transduction"/>
    <property type="evidence" value="ECO:0007669"/>
    <property type="project" value="UniProtKB-KW"/>
</dbReference>
<dbReference type="GO" id="GO:1904706">
    <property type="term" value="P:negative regulation of vascular associated smooth muscle cell proliferation"/>
    <property type="evidence" value="ECO:0007669"/>
    <property type="project" value="Ensembl"/>
</dbReference>
<dbReference type="CDD" id="cd08717">
    <property type="entry name" value="RGS_RGS5"/>
    <property type="match status" value="1"/>
</dbReference>
<dbReference type="FunFam" id="1.10.167.10:FF:000001">
    <property type="entry name" value="Putative regulator of g-protein signaling 12"/>
    <property type="match status" value="1"/>
</dbReference>
<dbReference type="FunFam" id="1.10.196.10:FF:000001">
    <property type="entry name" value="Regulator of G-protein signaling 8"/>
    <property type="match status" value="1"/>
</dbReference>
<dbReference type="Gene3D" id="1.10.196.10">
    <property type="match status" value="1"/>
</dbReference>
<dbReference type="Gene3D" id="1.10.167.10">
    <property type="entry name" value="Regulator of G-protein Signalling 4, domain 2"/>
    <property type="match status" value="1"/>
</dbReference>
<dbReference type="InterPro" id="IPR016137">
    <property type="entry name" value="RGS"/>
</dbReference>
<dbReference type="InterPro" id="IPR034956">
    <property type="entry name" value="RGS_RGS5"/>
</dbReference>
<dbReference type="InterPro" id="IPR036305">
    <property type="entry name" value="RGS_sf"/>
</dbReference>
<dbReference type="InterPro" id="IPR024066">
    <property type="entry name" value="RGS_subdom1/3"/>
</dbReference>
<dbReference type="InterPro" id="IPR044926">
    <property type="entry name" value="RGS_subdomain_2"/>
</dbReference>
<dbReference type="PANTHER" id="PTHR10845">
    <property type="entry name" value="REGULATOR OF G PROTEIN SIGNALING"/>
    <property type="match status" value="1"/>
</dbReference>
<dbReference type="PANTHER" id="PTHR10845:SF42">
    <property type="entry name" value="REGULATOR OF G-PROTEIN SIGNALING 5"/>
    <property type="match status" value="1"/>
</dbReference>
<dbReference type="Pfam" id="PF00615">
    <property type="entry name" value="RGS"/>
    <property type="match status" value="1"/>
</dbReference>
<dbReference type="PRINTS" id="PR01301">
    <property type="entry name" value="RGSPROTEIN"/>
</dbReference>
<dbReference type="SMART" id="SM00315">
    <property type="entry name" value="RGS"/>
    <property type="match status" value="1"/>
</dbReference>
<dbReference type="SUPFAM" id="SSF48097">
    <property type="entry name" value="Regulator of G-protein signaling, RGS"/>
    <property type="match status" value="1"/>
</dbReference>
<dbReference type="PROSITE" id="PS50132">
    <property type="entry name" value="RGS"/>
    <property type="match status" value="1"/>
</dbReference>
<keyword id="KW-0963">Cytoplasm</keyword>
<keyword id="KW-0472">Membrane</keyword>
<keyword id="KW-1185">Reference proteome</keyword>
<keyword id="KW-0734">Signal transduction inhibitor</keyword>
<gene>
    <name type="primary">Rgs5</name>
</gene>
<organism>
    <name type="scientific">Mus musculus</name>
    <name type="common">Mouse</name>
    <dbReference type="NCBI Taxonomy" id="10090"/>
    <lineage>
        <taxon>Eukaryota</taxon>
        <taxon>Metazoa</taxon>
        <taxon>Chordata</taxon>
        <taxon>Craniata</taxon>
        <taxon>Vertebrata</taxon>
        <taxon>Euteleostomi</taxon>
        <taxon>Mammalia</taxon>
        <taxon>Eutheria</taxon>
        <taxon>Euarchontoglires</taxon>
        <taxon>Glires</taxon>
        <taxon>Rodentia</taxon>
        <taxon>Myomorpha</taxon>
        <taxon>Muroidea</taxon>
        <taxon>Muridae</taxon>
        <taxon>Murinae</taxon>
        <taxon>Mus</taxon>
        <taxon>Mus</taxon>
    </lineage>
</organism>
<reference key="1">
    <citation type="journal article" date="1997" name="J. Biol. Chem.">
        <title>Characterization of a novel mammalian RGS protein that binds to Galpha proteins and inhibits pheromone signaling in yeast.</title>
        <authorList>
            <person name="Chen C."/>
            <person name="Zheng B."/>
            <person name="Han J."/>
            <person name="Lin S.-C."/>
        </authorList>
    </citation>
    <scope>NUCLEOTIDE SEQUENCE [MRNA]</scope>
</reference>
<reference key="2">
    <citation type="journal article" date="2005" name="Science">
        <title>The transcriptional landscape of the mammalian genome.</title>
        <authorList>
            <person name="Carninci P."/>
            <person name="Kasukawa T."/>
            <person name="Katayama S."/>
            <person name="Gough J."/>
            <person name="Frith M.C."/>
            <person name="Maeda N."/>
            <person name="Oyama R."/>
            <person name="Ravasi T."/>
            <person name="Lenhard B."/>
            <person name="Wells C."/>
            <person name="Kodzius R."/>
            <person name="Shimokawa K."/>
            <person name="Bajic V.B."/>
            <person name="Brenner S.E."/>
            <person name="Batalov S."/>
            <person name="Forrest A.R."/>
            <person name="Zavolan M."/>
            <person name="Davis M.J."/>
            <person name="Wilming L.G."/>
            <person name="Aidinis V."/>
            <person name="Allen J.E."/>
            <person name="Ambesi-Impiombato A."/>
            <person name="Apweiler R."/>
            <person name="Aturaliya R.N."/>
            <person name="Bailey T.L."/>
            <person name="Bansal M."/>
            <person name="Baxter L."/>
            <person name="Beisel K.W."/>
            <person name="Bersano T."/>
            <person name="Bono H."/>
            <person name="Chalk A.M."/>
            <person name="Chiu K.P."/>
            <person name="Choudhary V."/>
            <person name="Christoffels A."/>
            <person name="Clutterbuck D.R."/>
            <person name="Crowe M.L."/>
            <person name="Dalla E."/>
            <person name="Dalrymple B.P."/>
            <person name="de Bono B."/>
            <person name="Della Gatta G."/>
            <person name="di Bernardo D."/>
            <person name="Down T."/>
            <person name="Engstrom P."/>
            <person name="Fagiolini M."/>
            <person name="Faulkner G."/>
            <person name="Fletcher C.F."/>
            <person name="Fukushima T."/>
            <person name="Furuno M."/>
            <person name="Futaki S."/>
            <person name="Gariboldi M."/>
            <person name="Georgii-Hemming P."/>
            <person name="Gingeras T.R."/>
            <person name="Gojobori T."/>
            <person name="Green R.E."/>
            <person name="Gustincich S."/>
            <person name="Harbers M."/>
            <person name="Hayashi Y."/>
            <person name="Hensch T.K."/>
            <person name="Hirokawa N."/>
            <person name="Hill D."/>
            <person name="Huminiecki L."/>
            <person name="Iacono M."/>
            <person name="Ikeo K."/>
            <person name="Iwama A."/>
            <person name="Ishikawa T."/>
            <person name="Jakt M."/>
            <person name="Kanapin A."/>
            <person name="Katoh M."/>
            <person name="Kawasawa Y."/>
            <person name="Kelso J."/>
            <person name="Kitamura H."/>
            <person name="Kitano H."/>
            <person name="Kollias G."/>
            <person name="Krishnan S.P."/>
            <person name="Kruger A."/>
            <person name="Kummerfeld S.K."/>
            <person name="Kurochkin I.V."/>
            <person name="Lareau L.F."/>
            <person name="Lazarevic D."/>
            <person name="Lipovich L."/>
            <person name="Liu J."/>
            <person name="Liuni S."/>
            <person name="McWilliam S."/>
            <person name="Madan Babu M."/>
            <person name="Madera M."/>
            <person name="Marchionni L."/>
            <person name="Matsuda H."/>
            <person name="Matsuzawa S."/>
            <person name="Miki H."/>
            <person name="Mignone F."/>
            <person name="Miyake S."/>
            <person name="Morris K."/>
            <person name="Mottagui-Tabar S."/>
            <person name="Mulder N."/>
            <person name="Nakano N."/>
            <person name="Nakauchi H."/>
            <person name="Ng P."/>
            <person name="Nilsson R."/>
            <person name="Nishiguchi S."/>
            <person name="Nishikawa S."/>
            <person name="Nori F."/>
            <person name="Ohara O."/>
            <person name="Okazaki Y."/>
            <person name="Orlando V."/>
            <person name="Pang K.C."/>
            <person name="Pavan W.J."/>
            <person name="Pavesi G."/>
            <person name="Pesole G."/>
            <person name="Petrovsky N."/>
            <person name="Piazza S."/>
            <person name="Reed J."/>
            <person name="Reid J.F."/>
            <person name="Ring B.Z."/>
            <person name="Ringwald M."/>
            <person name="Rost B."/>
            <person name="Ruan Y."/>
            <person name="Salzberg S.L."/>
            <person name="Sandelin A."/>
            <person name="Schneider C."/>
            <person name="Schoenbach C."/>
            <person name="Sekiguchi K."/>
            <person name="Semple C.A."/>
            <person name="Seno S."/>
            <person name="Sessa L."/>
            <person name="Sheng Y."/>
            <person name="Shibata Y."/>
            <person name="Shimada H."/>
            <person name="Shimada K."/>
            <person name="Silva D."/>
            <person name="Sinclair B."/>
            <person name="Sperling S."/>
            <person name="Stupka E."/>
            <person name="Sugiura K."/>
            <person name="Sultana R."/>
            <person name="Takenaka Y."/>
            <person name="Taki K."/>
            <person name="Tammoja K."/>
            <person name="Tan S.L."/>
            <person name="Tang S."/>
            <person name="Taylor M.S."/>
            <person name="Tegner J."/>
            <person name="Teichmann S.A."/>
            <person name="Ueda H.R."/>
            <person name="van Nimwegen E."/>
            <person name="Verardo R."/>
            <person name="Wei C.L."/>
            <person name="Yagi K."/>
            <person name="Yamanishi H."/>
            <person name="Zabarovsky E."/>
            <person name="Zhu S."/>
            <person name="Zimmer A."/>
            <person name="Hide W."/>
            <person name="Bult C."/>
            <person name="Grimmond S.M."/>
            <person name="Teasdale R.D."/>
            <person name="Liu E.T."/>
            <person name="Brusic V."/>
            <person name="Quackenbush J."/>
            <person name="Wahlestedt C."/>
            <person name="Mattick J.S."/>
            <person name="Hume D.A."/>
            <person name="Kai C."/>
            <person name="Sasaki D."/>
            <person name="Tomaru Y."/>
            <person name="Fukuda S."/>
            <person name="Kanamori-Katayama M."/>
            <person name="Suzuki M."/>
            <person name="Aoki J."/>
            <person name="Arakawa T."/>
            <person name="Iida J."/>
            <person name="Imamura K."/>
            <person name="Itoh M."/>
            <person name="Kato T."/>
            <person name="Kawaji H."/>
            <person name="Kawagashira N."/>
            <person name="Kawashima T."/>
            <person name="Kojima M."/>
            <person name="Kondo S."/>
            <person name="Konno H."/>
            <person name="Nakano K."/>
            <person name="Ninomiya N."/>
            <person name="Nishio T."/>
            <person name="Okada M."/>
            <person name="Plessy C."/>
            <person name="Shibata K."/>
            <person name="Shiraki T."/>
            <person name="Suzuki S."/>
            <person name="Tagami M."/>
            <person name="Waki K."/>
            <person name="Watahiki A."/>
            <person name="Okamura-Oho Y."/>
            <person name="Suzuki H."/>
            <person name="Kawai J."/>
            <person name="Hayashizaki Y."/>
        </authorList>
    </citation>
    <scope>NUCLEOTIDE SEQUENCE [LARGE SCALE MRNA]</scope>
    <source>
        <strain>C57BL/6J</strain>
        <tissue>Brain cortex</tissue>
        <tissue>Embryo</tissue>
        <tissue>Oviduct</tissue>
    </source>
</reference>
<reference key="3">
    <citation type="journal article" date="2004" name="Genome Res.">
        <title>The status, quality, and expansion of the NIH full-length cDNA project: the Mammalian Gene Collection (MGC).</title>
        <authorList>
            <consortium name="The MGC Project Team"/>
        </authorList>
    </citation>
    <scope>NUCLEOTIDE SEQUENCE [LARGE SCALE MRNA]</scope>
    <source>
        <strain>FVB/N</strain>
        <tissue>Mammary gland</tissue>
    </source>
</reference>
<comment type="function">
    <text>Inhibits signal transduction by increasing the GTPase activity of G protein alpha subunits thereby driving them into their inactive GDP-bound form. Binds to G(i)-alpha and G(o)-alpha, but not to G(s)-alpha.</text>
</comment>
<comment type="subcellular location">
    <subcellularLocation>
        <location evidence="1">Cytoplasm</location>
    </subcellularLocation>
    <subcellularLocation>
        <location evidence="1">Membrane</location>
    </subcellularLocation>
</comment>
<comment type="tissue specificity">
    <text>Expressed in heart and muscle.</text>
</comment>
<evidence type="ECO:0000250" key="1">
    <source>
        <dbReference type="UniProtKB" id="O15539"/>
    </source>
</evidence>
<evidence type="ECO:0000255" key="2">
    <source>
        <dbReference type="PROSITE-ProRule" id="PRU00171"/>
    </source>
</evidence>
<evidence type="ECO:0000305" key="3"/>
<name>RGS5_MOUSE</name>
<sequence>MCKGLAALPHSCLERAKEIKIKLGILLQKPDSAVDLVIPYNEKPEKPAKAHKPSLEEVLQWRQSLDKLLQNSYGFASFKSFLKSEFSEENLEFWVACENYKKIKSPIKMAEKAKQIYEEFIQTEAPKEVNIDHFTKDITMKNLVEPSPRSFDLAQKRIYALMEKDSLPRFVRSEFYKELIK</sequence>
<accession>O08850</accession>
<accession>Q543B1</accession>
<accession>Q9D0Z2</accession>
<proteinExistence type="evidence at transcript level"/>
<feature type="chain" id="PRO_0000204189" description="Regulator of G-protein signaling 5">
    <location>
        <begin position="1"/>
        <end position="181"/>
    </location>
</feature>
<feature type="domain" description="RGS" evidence="2">
    <location>
        <begin position="64"/>
        <end position="180"/>
    </location>
</feature>
<feature type="sequence conflict" description="In Ref. 1; AAB50618." evidence="3" ref="1">
    <original>KA</original>
    <variation>NG</variation>
    <location>
        <begin position="49"/>
        <end position="50"/>
    </location>
</feature>
<feature type="sequence conflict" description="In Ref. 1; AAB50618." evidence="3" ref="1">
    <original>S</original>
    <variation>T</variation>
    <location>
        <position position="77"/>
    </location>
</feature>